<sequence length="859" mass="95869">MSSSSSSSESSPNLSRSNSLANTMVSMKTEDHTGLYDHRQHPDSLPVRHQPPTLKNKEIAKSTKPSIPKEQKSATRYNSHVDVGSVPSRGRMDFEDEGQGMDETVAHHQLRASAILTSNARPSRLAHSMPHQRQLYVESNIHTPPKDVGVKRDYTMSSSTASSGNKSKLSASSSASPITKVRKSSLVSPVLEIPHESKSDTHSKLAKPKKRTYSTTSAHSSINPAVLLTKSTSQKSDADDDTLERKPVRMNTRASFDSDVSQASRDSQETEEDVCFPMPPQLHTRVNGIDFDELEEYAQFANAEKSQFLASLQVPNEQKYSNVSQDIGFTSSTSTSGSSAALKYTPRVSQTGEKSESTNETEIHEKKEDEHEKIKPSLHPGISFGKNKVEGEENENIPSNDPAYCSYQGTDFQIPNRFSFFCSESDETVHASDIPSLVSEGQTFYELFRGGEPTWWLDCSCPTDDEMRCIAKAFGIHPLTAEDIRMQETREKVELFKSYYFVCFHTFENDKESEDFLEPINVYIVVCRSGVLTFHFGPISHCANVRRRVRQLRDYVNVNSDWLCYALIDDITDSFAPVIQSIEYEADAIEDSVFMARDMDFAAMLQRIGESRRKTMTLMRLLSGKADVIKMFAKRCQDEANGIGPALTSQINIANLQARQDNASHIKNNSSTTVPNNYAPTTSQPRGDIALYLGDIQDHLLTMFQNLLAYEKIFSRSHTNYLAQLQVESFNSNNKVTEMLGKVTMIGTMLVPLNVITGLFGMNVKVPGENSSIAWWFGILGVLLLLAVLGWFLASYWIKRIDPPATLNEAAESGAKSVISSFLPKRNKRFNDRSKNINVRAGPSNKSVASLPSRYSRYD</sequence>
<evidence type="ECO:0000255" key="1"/>
<evidence type="ECO:0000256" key="2">
    <source>
        <dbReference type="SAM" id="MobiDB-lite"/>
    </source>
</evidence>
<evidence type="ECO:0000269" key="3">
    <source>
    </source>
</evidence>
<evidence type="ECO:0000305" key="4"/>
<evidence type="ECO:0000305" key="5">
    <source>
    </source>
</evidence>
<evidence type="ECO:0007744" key="6">
    <source>
    </source>
</evidence>
<evidence type="ECO:0007744" key="7">
    <source>
    </source>
</evidence>
<evidence type="ECO:0007744" key="8">
    <source>
    </source>
</evidence>
<evidence type="ECO:0007744" key="9">
    <source>
    </source>
</evidence>
<dbReference type="EMBL" id="U41293">
    <property type="protein sequence ID" value="AAC49462.1"/>
    <property type="molecule type" value="Genomic_DNA"/>
</dbReference>
<dbReference type="EMBL" id="Z74872">
    <property type="protein sequence ID" value="CAA99150.1"/>
    <property type="molecule type" value="Genomic_DNA"/>
</dbReference>
<dbReference type="EMBL" id="Z74871">
    <property type="protein sequence ID" value="CAA99149.1"/>
    <property type="molecule type" value="Genomic_DNA"/>
</dbReference>
<dbReference type="EMBL" id="AY692762">
    <property type="protein sequence ID" value="AAT92781.1"/>
    <property type="molecule type" value="Genomic_DNA"/>
</dbReference>
<dbReference type="EMBL" id="BK006948">
    <property type="protein sequence ID" value="DAA10654.1"/>
    <property type="molecule type" value="Genomic_DNA"/>
</dbReference>
<dbReference type="PIR" id="S66827">
    <property type="entry name" value="S66827"/>
</dbReference>
<dbReference type="RefSeq" id="NP_014511.1">
    <property type="nucleotide sequence ID" value="NM_001183384.1"/>
</dbReference>
<dbReference type="SMR" id="Q08269"/>
<dbReference type="BioGRID" id="34245">
    <property type="interactions" value="51"/>
</dbReference>
<dbReference type="DIP" id="DIP-1184N"/>
<dbReference type="FunCoup" id="Q08269">
    <property type="interactions" value="84"/>
</dbReference>
<dbReference type="IntAct" id="Q08269">
    <property type="interactions" value="14"/>
</dbReference>
<dbReference type="MINT" id="Q08269"/>
<dbReference type="STRING" id="4932.YOL130W"/>
<dbReference type="TCDB" id="1.A.35.2.1">
    <property type="family name" value="the cora metal ion transporter (mit) family"/>
</dbReference>
<dbReference type="iPTMnet" id="Q08269"/>
<dbReference type="PaxDb" id="4932-YOL130W"/>
<dbReference type="PeptideAtlas" id="Q08269"/>
<dbReference type="EnsemblFungi" id="YOL130W_mRNA">
    <property type="protein sequence ID" value="YOL130W"/>
    <property type="gene ID" value="YOL130W"/>
</dbReference>
<dbReference type="GeneID" id="853990"/>
<dbReference type="KEGG" id="sce:YOL130W"/>
<dbReference type="AGR" id="SGD:S000005490"/>
<dbReference type="SGD" id="S000005490">
    <property type="gene designation" value="ALR1"/>
</dbReference>
<dbReference type="VEuPathDB" id="FungiDB:YOL130W"/>
<dbReference type="eggNOG" id="ENOG502QPTQ">
    <property type="taxonomic scope" value="Eukaryota"/>
</dbReference>
<dbReference type="GeneTree" id="ENSGT00940000176664"/>
<dbReference type="HOGENOM" id="CLU_007127_6_0_1"/>
<dbReference type="InParanoid" id="Q08269"/>
<dbReference type="OMA" id="AHSMPHQ"/>
<dbReference type="OrthoDB" id="29879at2759"/>
<dbReference type="BioCyc" id="YEAST:G3O-33525-MONOMER"/>
<dbReference type="BRENDA" id="7.2.2.14">
    <property type="organism ID" value="984"/>
</dbReference>
<dbReference type="BioGRID-ORCS" id="853990">
    <property type="hits" value="2 hits in 10 CRISPR screens"/>
</dbReference>
<dbReference type="PRO" id="PR:Q08269"/>
<dbReference type="Proteomes" id="UP000002311">
    <property type="component" value="Chromosome XV"/>
</dbReference>
<dbReference type="RNAct" id="Q08269">
    <property type="molecule type" value="protein"/>
</dbReference>
<dbReference type="GO" id="GO:0071944">
    <property type="term" value="C:cell periphery"/>
    <property type="evidence" value="ECO:0007005"/>
    <property type="project" value="SGD"/>
</dbReference>
<dbReference type="GO" id="GO:0005886">
    <property type="term" value="C:plasma membrane"/>
    <property type="evidence" value="ECO:0000314"/>
    <property type="project" value="SGD"/>
</dbReference>
<dbReference type="GO" id="GO:0022890">
    <property type="term" value="F:inorganic cation transmembrane transporter activity"/>
    <property type="evidence" value="ECO:0000315"/>
    <property type="project" value="SGD"/>
</dbReference>
<dbReference type="GO" id="GO:0015095">
    <property type="term" value="F:magnesium ion transmembrane transporter activity"/>
    <property type="evidence" value="ECO:0000318"/>
    <property type="project" value="GO_Central"/>
</dbReference>
<dbReference type="GO" id="GO:0010961">
    <property type="term" value="P:intracellular magnesium ion homeostasis"/>
    <property type="evidence" value="ECO:0000318"/>
    <property type="project" value="GO_Central"/>
</dbReference>
<dbReference type="GO" id="GO:0015693">
    <property type="term" value="P:magnesium ion transport"/>
    <property type="evidence" value="ECO:0000314"/>
    <property type="project" value="SGD"/>
</dbReference>
<dbReference type="GO" id="GO:0006812">
    <property type="term" value="P:monoatomic cation transport"/>
    <property type="evidence" value="ECO:0000315"/>
    <property type="project" value="SGD"/>
</dbReference>
<dbReference type="CDD" id="cd12829">
    <property type="entry name" value="Alr1p-like"/>
    <property type="match status" value="1"/>
</dbReference>
<dbReference type="FunFam" id="1.20.58.340:FF:000008">
    <property type="entry name" value="CorA family metal ion transporter"/>
    <property type="match status" value="1"/>
</dbReference>
<dbReference type="FunFam" id="3.30.460.20:FF:000003">
    <property type="entry name" value="Magnesium transporter ALR1"/>
    <property type="match status" value="1"/>
</dbReference>
<dbReference type="Gene3D" id="3.30.460.20">
    <property type="entry name" value="CorA soluble domain-like"/>
    <property type="match status" value="1"/>
</dbReference>
<dbReference type="Gene3D" id="1.20.58.340">
    <property type="entry name" value="Magnesium transport protein CorA, transmembrane region"/>
    <property type="match status" value="2"/>
</dbReference>
<dbReference type="InterPro" id="IPR044089">
    <property type="entry name" value="Alr1-like"/>
</dbReference>
<dbReference type="InterPro" id="IPR045861">
    <property type="entry name" value="CorA_cytoplasmic_dom"/>
</dbReference>
<dbReference type="InterPro" id="IPR045863">
    <property type="entry name" value="CorA_TM1_TM2"/>
</dbReference>
<dbReference type="InterPro" id="IPR002523">
    <property type="entry name" value="MgTranspt_CorA/ZnTranspt_ZntB"/>
</dbReference>
<dbReference type="PANTHER" id="PTHR21535">
    <property type="entry name" value="MAGNESIUM AND COBALT TRANSPORT PROTEIN/MITOCHONDRIAL IMPORT INNER MEMBRANE TRANSLOCASE SUBUNIT TIM8"/>
    <property type="match status" value="1"/>
</dbReference>
<dbReference type="PANTHER" id="PTHR21535:SF55">
    <property type="entry name" value="MAGNESIUM TRANSPORTER ALR1-RELATED"/>
    <property type="match status" value="1"/>
</dbReference>
<dbReference type="Pfam" id="PF01544">
    <property type="entry name" value="CorA"/>
    <property type="match status" value="2"/>
</dbReference>
<dbReference type="SUPFAM" id="SSF143865">
    <property type="entry name" value="CorA soluble domain-like"/>
    <property type="match status" value="1"/>
</dbReference>
<dbReference type="SUPFAM" id="SSF144083">
    <property type="entry name" value="Magnesium transport protein CorA, transmembrane region"/>
    <property type="match status" value="1"/>
</dbReference>
<proteinExistence type="evidence at protein level"/>
<name>ALR1_YEAST</name>
<feature type="initiator methionine" description="Removed" evidence="9">
    <location>
        <position position="1"/>
    </location>
</feature>
<feature type="chain" id="PRO_0000201535" description="Magnesium transporter ALR1">
    <location>
        <begin position="2"/>
        <end position="859"/>
    </location>
</feature>
<feature type="transmembrane region" description="Helical" evidence="1">
    <location>
        <begin position="744"/>
        <end position="764"/>
    </location>
</feature>
<feature type="transmembrane region" description="Helical" evidence="1">
    <location>
        <begin position="773"/>
        <end position="793"/>
    </location>
</feature>
<feature type="region of interest" description="Disordered" evidence="2">
    <location>
        <begin position="1"/>
        <end position="281"/>
    </location>
</feature>
<feature type="region of interest" description="Disordered" evidence="2">
    <location>
        <begin position="330"/>
        <end position="399"/>
    </location>
</feature>
<feature type="region of interest" description="Disordered" evidence="2">
    <location>
        <begin position="830"/>
        <end position="859"/>
    </location>
</feature>
<feature type="compositionally biased region" description="Low complexity" evidence="2">
    <location>
        <begin position="1"/>
        <end position="20"/>
    </location>
</feature>
<feature type="compositionally biased region" description="Basic and acidic residues" evidence="2">
    <location>
        <begin position="28"/>
        <end position="42"/>
    </location>
</feature>
<feature type="compositionally biased region" description="Basic and acidic residues" evidence="2">
    <location>
        <begin position="55"/>
        <end position="73"/>
    </location>
</feature>
<feature type="compositionally biased region" description="Basic and acidic residues" evidence="2">
    <location>
        <begin position="144"/>
        <end position="154"/>
    </location>
</feature>
<feature type="compositionally biased region" description="Low complexity" evidence="2">
    <location>
        <begin position="157"/>
        <end position="176"/>
    </location>
</feature>
<feature type="compositionally biased region" description="Basic and acidic residues" evidence="2">
    <location>
        <begin position="193"/>
        <end position="203"/>
    </location>
</feature>
<feature type="compositionally biased region" description="Polar residues" evidence="2">
    <location>
        <begin position="213"/>
        <end position="235"/>
    </location>
</feature>
<feature type="compositionally biased region" description="Polar residues" evidence="2">
    <location>
        <begin position="252"/>
        <end position="265"/>
    </location>
</feature>
<feature type="compositionally biased region" description="Low complexity" evidence="2">
    <location>
        <begin position="330"/>
        <end position="339"/>
    </location>
</feature>
<feature type="compositionally biased region" description="Basic and acidic residues" evidence="2">
    <location>
        <begin position="353"/>
        <end position="375"/>
    </location>
</feature>
<feature type="modified residue" description="N-acetylserine" evidence="9">
    <location>
        <position position="2"/>
    </location>
</feature>
<feature type="modified residue" description="Phosphotyrosine" evidence="6">
    <location>
        <position position="77"/>
    </location>
</feature>
<feature type="modified residue" description="Phosphoserine" evidence="8">
    <location>
        <position position="85"/>
    </location>
</feature>
<feature type="modified residue" description="Phosphoserine" evidence="8">
    <location>
        <position position="185"/>
    </location>
</feature>
<feature type="modified residue" description="Phosphoserine" evidence="8">
    <location>
        <position position="188"/>
    </location>
</feature>
<feature type="modified residue" description="Phosphoserine" evidence="6">
    <location>
        <position position="220"/>
    </location>
</feature>
<feature type="modified residue" description="Phosphoserine" evidence="6">
    <location>
        <position position="221"/>
    </location>
</feature>
<feature type="modified residue" description="Phosphoserine" evidence="6">
    <location>
        <position position="236"/>
    </location>
</feature>
<feature type="modified residue" description="Phosphothreonine" evidence="6">
    <location>
        <position position="242"/>
    </location>
</feature>
<feature type="modified residue" description="Phosphoserine" evidence="7">
    <location>
        <position position="850"/>
    </location>
</feature>
<feature type="sequence conflict" description="In Ref. 1; AAC49462." evidence="4" ref="1">
    <original>N</original>
    <variation>Y</variation>
    <location>
        <position position="13"/>
    </location>
</feature>
<accession>Q08269</accession>
<accession>D6W1T8</accession>
<accession>Q02811</accession>
<comment type="function">
    <text evidence="3">Plasma membrane magnesium transporter.</text>
</comment>
<comment type="subcellular location">
    <subcellularLocation>
        <location evidence="5">Cell membrane</location>
        <topology evidence="4">Multi-pass membrane protein</topology>
    </subcellularLocation>
</comment>
<comment type="similarity">
    <text evidence="4">Belongs to the CorA metal ion transporter (MIT) (TC 1.A.35) family.</text>
</comment>
<gene>
    <name type="primary">ALR1</name>
    <name type="ordered locus">YOL130W</name>
</gene>
<keyword id="KW-0007">Acetylation</keyword>
<keyword id="KW-1003">Cell membrane</keyword>
<keyword id="KW-0460">Magnesium</keyword>
<keyword id="KW-0472">Membrane</keyword>
<keyword id="KW-0597">Phosphoprotein</keyword>
<keyword id="KW-1185">Reference proteome</keyword>
<keyword id="KW-0812">Transmembrane</keyword>
<keyword id="KW-1133">Transmembrane helix</keyword>
<keyword id="KW-0813">Transport</keyword>
<organism>
    <name type="scientific">Saccharomyces cerevisiae (strain ATCC 204508 / S288c)</name>
    <name type="common">Baker's yeast</name>
    <dbReference type="NCBI Taxonomy" id="559292"/>
    <lineage>
        <taxon>Eukaryota</taxon>
        <taxon>Fungi</taxon>
        <taxon>Dikarya</taxon>
        <taxon>Ascomycota</taxon>
        <taxon>Saccharomycotina</taxon>
        <taxon>Saccharomycetes</taxon>
        <taxon>Saccharomycetales</taxon>
        <taxon>Saccharomycetaceae</taxon>
        <taxon>Saccharomyces</taxon>
    </lineage>
</organism>
<protein>
    <recommendedName>
        <fullName>Magnesium transporter ALR1</fullName>
    </recommendedName>
    <alternativeName>
        <fullName>Aluminum resistance protein 1</fullName>
    </alternativeName>
</protein>
<reference key="1">
    <citation type="journal article" date="1996" name="Yeast">
        <title>Sequence analysis of a 13.4 kbp fragment from the left arm of chromosome XV reveals a malate dehydrogenase gene, a putative Ser/Thr protein kinase, the ribosomal L25 gene and four new open reading frames.</title>
        <authorList>
            <person name="Casamayor A."/>
            <person name="Khalid H."/>
            <person name="Balcells L."/>
            <person name="Aldea M."/>
            <person name="Casas C."/>
            <person name="Herrero E."/>
            <person name="Arino J."/>
        </authorList>
    </citation>
    <scope>NUCLEOTIDE SEQUENCE [GENOMIC DNA]</scope>
    <source>
        <strain>ATCC 96604 / S288c / FY1679</strain>
    </source>
</reference>
<reference key="2">
    <citation type="journal article" date="1997" name="Nature">
        <title>The nucleotide sequence of Saccharomyces cerevisiae chromosome XV.</title>
        <authorList>
            <person name="Dujon B."/>
            <person name="Albermann K."/>
            <person name="Aldea M."/>
            <person name="Alexandraki D."/>
            <person name="Ansorge W."/>
            <person name="Arino J."/>
            <person name="Benes V."/>
            <person name="Bohn C."/>
            <person name="Bolotin-Fukuhara M."/>
            <person name="Bordonne R."/>
            <person name="Boyer J."/>
            <person name="Camasses A."/>
            <person name="Casamayor A."/>
            <person name="Casas C."/>
            <person name="Cheret G."/>
            <person name="Cziepluch C."/>
            <person name="Daignan-Fornier B."/>
            <person name="Dang V.-D."/>
            <person name="de Haan M."/>
            <person name="Delius H."/>
            <person name="Durand P."/>
            <person name="Fairhead C."/>
            <person name="Feldmann H."/>
            <person name="Gaillon L."/>
            <person name="Galisson F."/>
            <person name="Gamo F.-J."/>
            <person name="Gancedo C."/>
            <person name="Goffeau A."/>
            <person name="Goulding S.E."/>
            <person name="Grivell L.A."/>
            <person name="Habbig B."/>
            <person name="Hand N.J."/>
            <person name="Hani J."/>
            <person name="Hattenhorst U."/>
            <person name="Hebling U."/>
            <person name="Hernando Y."/>
            <person name="Herrero E."/>
            <person name="Heumann K."/>
            <person name="Hiesel R."/>
            <person name="Hilger F."/>
            <person name="Hofmann B."/>
            <person name="Hollenberg C.P."/>
            <person name="Hughes B."/>
            <person name="Jauniaux J.-C."/>
            <person name="Kalogeropoulos A."/>
            <person name="Katsoulou C."/>
            <person name="Kordes E."/>
            <person name="Lafuente M.J."/>
            <person name="Landt O."/>
            <person name="Louis E.J."/>
            <person name="Maarse A.C."/>
            <person name="Madania A."/>
            <person name="Mannhaupt G."/>
            <person name="Marck C."/>
            <person name="Martin R.P."/>
            <person name="Mewes H.-W."/>
            <person name="Michaux G."/>
            <person name="Paces V."/>
            <person name="Parle-McDermott A.G."/>
            <person name="Pearson B.M."/>
            <person name="Perrin A."/>
            <person name="Pettersson B."/>
            <person name="Poch O."/>
            <person name="Pohl T.M."/>
            <person name="Poirey R."/>
            <person name="Portetelle D."/>
            <person name="Pujol A."/>
            <person name="Purnelle B."/>
            <person name="Ramezani Rad M."/>
            <person name="Rechmann S."/>
            <person name="Schwager C."/>
            <person name="Schweizer M."/>
            <person name="Sor F."/>
            <person name="Sterky F."/>
            <person name="Tarassov I.A."/>
            <person name="Teodoru C."/>
            <person name="Tettelin H."/>
            <person name="Thierry A."/>
            <person name="Tobiasch E."/>
            <person name="Tzermia M."/>
            <person name="Uhlen M."/>
            <person name="Unseld M."/>
            <person name="Valens M."/>
            <person name="Vandenbol M."/>
            <person name="Vetter I."/>
            <person name="Vlcek C."/>
            <person name="Voet M."/>
            <person name="Volckaert G."/>
            <person name="Voss H."/>
            <person name="Wambutt R."/>
            <person name="Wedler H."/>
            <person name="Wiemann S."/>
            <person name="Winsor B."/>
            <person name="Wolfe K.H."/>
            <person name="Zollner A."/>
            <person name="Zumstein E."/>
            <person name="Kleine K."/>
        </authorList>
    </citation>
    <scope>NUCLEOTIDE SEQUENCE [LARGE SCALE GENOMIC DNA]</scope>
    <source>
        <strain>ATCC 204508 / S288c</strain>
    </source>
</reference>
<reference key="3">
    <citation type="journal article" date="2014" name="G3 (Bethesda)">
        <title>The reference genome sequence of Saccharomyces cerevisiae: Then and now.</title>
        <authorList>
            <person name="Engel S.R."/>
            <person name="Dietrich F.S."/>
            <person name="Fisk D.G."/>
            <person name="Binkley G."/>
            <person name="Balakrishnan R."/>
            <person name="Costanzo M.C."/>
            <person name="Dwight S.S."/>
            <person name="Hitz B.C."/>
            <person name="Karra K."/>
            <person name="Nash R.S."/>
            <person name="Weng S."/>
            <person name="Wong E.D."/>
            <person name="Lloyd P."/>
            <person name="Skrzypek M.S."/>
            <person name="Miyasato S.R."/>
            <person name="Simison M."/>
            <person name="Cherry J.M."/>
        </authorList>
    </citation>
    <scope>GENOME REANNOTATION</scope>
    <source>
        <strain>ATCC 204508 / S288c</strain>
    </source>
</reference>
<reference key="4">
    <citation type="journal article" date="2007" name="Genome Res.">
        <title>Approaching a complete repository of sequence-verified protein-encoding clones for Saccharomyces cerevisiae.</title>
        <authorList>
            <person name="Hu Y."/>
            <person name="Rolfs A."/>
            <person name="Bhullar B."/>
            <person name="Murthy T.V.S."/>
            <person name="Zhu C."/>
            <person name="Berger M.F."/>
            <person name="Camargo A.A."/>
            <person name="Kelley F."/>
            <person name="McCarron S."/>
            <person name="Jepson D."/>
            <person name="Richardson A."/>
            <person name="Raphael J."/>
            <person name="Moreira D."/>
            <person name="Taycher E."/>
            <person name="Zuo D."/>
            <person name="Mohr S."/>
            <person name="Kane M.F."/>
            <person name="Williamson J."/>
            <person name="Simpson A.J.G."/>
            <person name="Bulyk M.L."/>
            <person name="Harlow E."/>
            <person name="Marsischky G."/>
            <person name="Kolodner R.D."/>
            <person name="LaBaer J."/>
        </authorList>
    </citation>
    <scope>NUCLEOTIDE SEQUENCE [GENOMIC DNA]</scope>
    <source>
        <strain>ATCC 204508 / S288c</strain>
    </source>
</reference>
<reference key="5">
    <citation type="journal article" date="1998" name="J. Biol. Chem.">
        <title>Overexpression of the Saccharomyces cerevisiae magnesium transport system confers resistance to aluminum ion.</title>
        <authorList>
            <person name="MacDiarmid C.W."/>
            <person name="Gardner R.C."/>
        </authorList>
    </citation>
    <scope>FUNCTION</scope>
</reference>
<reference key="6">
    <citation type="journal article" date="2007" name="J. Proteome Res.">
        <title>Large-scale phosphorylation analysis of alpha-factor-arrested Saccharomyces cerevisiae.</title>
        <authorList>
            <person name="Li X."/>
            <person name="Gerber S.A."/>
            <person name="Rudner A.D."/>
            <person name="Beausoleil S.A."/>
            <person name="Haas W."/>
            <person name="Villen J."/>
            <person name="Elias J.E."/>
            <person name="Gygi S.P."/>
        </authorList>
    </citation>
    <scope>PHOSPHORYLATION [LARGE SCALE ANALYSIS] AT TYR-77; SER-220; SER-221; SER-236 AND THR-242</scope>
    <scope>IDENTIFICATION BY MASS SPECTROMETRY [LARGE SCALE ANALYSIS]</scope>
    <source>
        <strain>ADR376</strain>
    </source>
</reference>
<reference key="7">
    <citation type="journal article" date="2008" name="Mol. Cell. Proteomics">
        <title>A multidimensional chromatography technology for in-depth phosphoproteome analysis.</title>
        <authorList>
            <person name="Albuquerque C.P."/>
            <person name="Smolka M.B."/>
            <person name="Payne S.H."/>
            <person name="Bafna V."/>
            <person name="Eng J."/>
            <person name="Zhou H."/>
        </authorList>
    </citation>
    <scope>PHOSPHORYLATION [LARGE SCALE ANALYSIS] AT SER-850</scope>
    <scope>IDENTIFICATION BY MASS SPECTROMETRY [LARGE SCALE ANALYSIS]</scope>
</reference>
<reference key="8">
    <citation type="journal article" date="2009" name="Science">
        <title>Global analysis of Cdk1 substrate phosphorylation sites provides insights into evolution.</title>
        <authorList>
            <person name="Holt L.J."/>
            <person name="Tuch B.B."/>
            <person name="Villen J."/>
            <person name="Johnson A.D."/>
            <person name="Gygi S.P."/>
            <person name="Morgan D.O."/>
        </authorList>
    </citation>
    <scope>PHOSPHORYLATION [LARGE SCALE ANALYSIS] AT SER-85; SER-185 AND SER-188</scope>
    <scope>IDENTIFICATION BY MASS SPECTROMETRY [LARGE SCALE ANALYSIS]</scope>
</reference>
<reference key="9">
    <citation type="journal article" date="2012" name="Proc. Natl. Acad. Sci. U.S.A.">
        <title>N-terminal acetylome analyses and functional insights of the N-terminal acetyltransferase NatB.</title>
        <authorList>
            <person name="Van Damme P."/>
            <person name="Lasa M."/>
            <person name="Polevoda B."/>
            <person name="Gazquez C."/>
            <person name="Elosegui-Artola A."/>
            <person name="Kim D.S."/>
            <person name="De Juan-Pardo E."/>
            <person name="Demeyer K."/>
            <person name="Hole K."/>
            <person name="Larrea E."/>
            <person name="Timmerman E."/>
            <person name="Prieto J."/>
            <person name="Arnesen T."/>
            <person name="Sherman F."/>
            <person name="Gevaert K."/>
            <person name="Aldabe R."/>
        </authorList>
    </citation>
    <scope>ACETYLATION [LARGE SCALE ANALYSIS] AT SER-2</scope>
    <scope>CLEAVAGE OF INITIATOR METHIONINE [LARGE SCALE ANALYSIS]</scope>
    <scope>IDENTIFICATION BY MASS SPECTROMETRY [LARGE SCALE ANALYSIS]</scope>
</reference>